<evidence type="ECO:0000250" key="1">
    <source>
        <dbReference type="UniProtKB" id="M0R7Z9"/>
    </source>
</evidence>
<evidence type="ECO:0000250" key="2">
    <source>
        <dbReference type="UniProtKB" id="Q00G26"/>
    </source>
</evidence>
<evidence type="ECO:0000256" key="3">
    <source>
        <dbReference type="SAM" id="MobiDB-lite"/>
    </source>
</evidence>
<evidence type="ECO:0000269" key="4">
    <source>
    </source>
</evidence>
<evidence type="ECO:0000269" key="5">
    <source>
    </source>
</evidence>
<evidence type="ECO:0000269" key="6">
    <source>
    </source>
</evidence>
<evidence type="ECO:0000269" key="7">
    <source>
    </source>
</evidence>
<evidence type="ECO:0000269" key="8">
    <source>
    </source>
</evidence>
<evidence type="ECO:0000269" key="9">
    <source>
    </source>
</evidence>
<evidence type="ECO:0000269" key="10">
    <source>
    </source>
</evidence>
<evidence type="ECO:0000269" key="11">
    <source>
    </source>
</evidence>
<evidence type="ECO:0000269" key="12">
    <source>
    </source>
</evidence>
<evidence type="ECO:0000269" key="13">
    <source>
    </source>
</evidence>
<evidence type="ECO:0000269" key="14">
    <source>
    </source>
</evidence>
<evidence type="ECO:0000269" key="15">
    <source>
    </source>
</evidence>
<evidence type="ECO:0000269" key="16">
    <source>
    </source>
</evidence>
<evidence type="ECO:0000303" key="17">
    <source ref="2"/>
</evidence>
<evidence type="ECO:0000305" key="18"/>
<evidence type="ECO:0007744" key="19">
    <source>
    </source>
</evidence>
<evidence type="ECO:0007744" key="20">
    <source>
    </source>
</evidence>
<organism>
    <name type="scientific">Mus musculus</name>
    <name type="common">Mouse</name>
    <dbReference type="NCBI Taxonomy" id="10090"/>
    <lineage>
        <taxon>Eukaryota</taxon>
        <taxon>Metazoa</taxon>
        <taxon>Chordata</taxon>
        <taxon>Craniata</taxon>
        <taxon>Vertebrata</taxon>
        <taxon>Euteleostomi</taxon>
        <taxon>Mammalia</taxon>
        <taxon>Eutheria</taxon>
        <taxon>Euarchontoglires</taxon>
        <taxon>Glires</taxon>
        <taxon>Rodentia</taxon>
        <taxon>Myomorpha</taxon>
        <taxon>Muroidea</taxon>
        <taxon>Muridae</taxon>
        <taxon>Murinae</taxon>
        <taxon>Mus</taxon>
        <taxon>Mus</taxon>
    </lineage>
</organism>
<proteinExistence type="evidence at protein level"/>
<keyword id="KW-0024">Alternative initiation</keyword>
<keyword id="KW-0963">Cytoplasm</keyword>
<keyword id="KW-0551">Lipid droplet</keyword>
<keyword id="KW-0443">Lipid metabolism</keyword>
<keyword id="KW-0496">Mitochondrion</keyword>
<keyword id="KW-0597">Phosphoprotein</keyword>
<keyword id="KW-1185">Reference proteome</keyword>
<protein>
    <recommendedName>
        <fullName>Perilipin-5</fullName>
    </recommendedName>
    <alternativeName>
        <fullName>Lipid droplet-associated protein PAT-1</fullName>
    </alternativeName>
    <alternativeName>
        <fullName>Lipid storage droplet protein 5</fullName>
    </alternativeName>
    <alternativeName>
        <fullName>Myocardial LD protein</fullName>
    </alternativeName>
</protein>
<reference key="1">
    <citation type="journal article" date="2007" name="Biochim. Biophys. Acta">
        <title>LSDP5 is a PAT protein specifically expressed in fatty acid oxidizing tissues.</title>
        <authorList>
            <person name="Dalen K.T."/>
            <person name="Dahl T."/>
            <person name="Holter E."/>
            <person name="Arntsen B."/>
            <person name="Londos C."/>
            <person name="Sztalryd C."/>
            <person name="Nebb H.I."/>
        </authorList>
    </citation>
    <scope>NUCLEOTIDE SEQUENCE [MRNA] (ISOFORM 1)</scope>
    <scope>TISSUE SPECIFICITY</scope>
    <scope>SUBCELLULAR LOCATION</scope>
    <scope>INDUCTION</scope>
    <scope>ALTERNATIVE INITIATION</scope>
    <source>
        <strain>C57BL/6J</strain>
    </source>
</reference>
<reference key="2">
    <citation type="submission" date="2005-02" db="EMBL/GenBank/DDBJ databases">
        <authorList>
            <person name="Tansey J.T."/>
            <person name="Kimmel A.R."/>
            <person name="Hlavin E.M."/>
            <person name="Dickey L.O."/>
            <person name="Londos C."/>
        </authorList>
    </citation>
    <scope>NUCLEOTIDE SEQUENCE [MRNA] (ISOFORM 2)</scope>
    <source>
        <strain>C57BL/6J</strain>
    </source>
</reference>
<reference key="3">
    <citation type="journal article" date="2005" name="Science">
        <title>The transcriptional landscape of the mammalian genome.</title>
        <authorList>
            <person name="Carninci P."/>
            <person name="Kasukawa T."/>
            <person name="Katayama S."/>
            <person name="Gough J."/>
            <person name="Frith M.C."/>
            <person name="Maeda N."/>
            <person name="Oyama R."/>
            <person name="Ravasi T."/>
            <person name="Lenhard B."/>
            <person name="Wells C."/>
            <person name="Kodzius R."/>
            <person name="Shimokawa K."/>
            <person name="Bajic V.B."/>
            <person name="Brenner S.E."/>
            <person name="Batalov S."/>
            <person name="Forrest A.R."/>
            <person name="Zavolan M."/>
            <person name="Davis M.J."/>
            <person name="Wilming L.G."/>
            <person name="Aidinis V."/>
            <person name="Allen J.E."/>
            <person name="Ambesi-Impiombato A."/>
            <person name="Apweiler R."/>
            <person name="Aturaliya R.N."/>
            <person name="Bailey T.L."/>
            <person name="Bansal M."/>
            <person name="Baxter L."/>
            <person name="Beisel K.W."/>
            <person name="Bersano T."/>
            <person name="Bono H."/>
            <person name="Chalk A.M."/>
            <person name="Chiu K.P."/>
            <person name="Choudhary V."/>
            <person name="Christoffels A."/>
            <person name="Clutterbuck D.R."/>
            <person name="Crowe M.L."/>
            <person name="Dalla E."/>
            <person name="Dalrymple B.P."/>
            <person name="de Bono B."/>
            <person name="Della Gatta G."/>
            <person name="di Bernardo D."/>
            <person name="Down T."/>
            <person name="Engstrom P."/>
            <person name="Fagiolini M."/>
            <person name="Faulkner G."/>
            <person name="Fletcher C.F."/>
            <person name="Fukushima T."/>
            <person name="Furuno M."/>
            <person name="Futaki S."/>
            <person name="Gariboldi M."/>
            <person name="Georgii-Hemming P."/>
            <person name="Gingeras T.R."/>
            <person name="Gojobori T."/>
            <person name="Green R.E."/>
            <person name="Gustincich S."/>
            <person name="Harbers M."/>
            <person name="Hayashi Y."/>
            <person name="Hensch T.K."/>
            <person name="Hirokawa N."/>
            <person name="Hill D."/>
            <person name="Huminiecki L."/>
            <person name="Iacono M."/>
            <person name="Ikeo K."/>
            <person name="Iwama A."/>
            <person name="Ishikawa T."/>
            <person name="Jakt M."/>
            <person name="Kanapin A."/>
            <person name="Katoh M."/>
            <person name="Kawasawa Y."/>
            <person name="Kelso J."/>
            <person name="Kitamura H."/>
            <person name="Kitano H."/>
            <person name="Kollias G."/>
            <person name="Krishnan S.P."/>
            <person name="Kruger A."/>
            <person name="Kummerfeld S.K."/>
            <person name="Kurochkin I.V."/>
            <person name="Lareau L.F."/>
            <person name="Lazarevic D."/>
            <person name="Lipovich L."/>
            <person name="Liu J."/>
            <person name="Liuni S."/>
            <person name="McWilliam S."/>
            <person name="Madan Babu M."/>
            <person name="Madera M."/>
            <person name="Marchionni L."/>
            <person name="Matsuda H."/>
            <person name="Matsuzawa S."/>
            <person name="Miki H."/>
            <person name="Mignone F."/>
            <person name="Miyake S."/>
            <person name="Morris K."/>
            <person name="Mottagui-Tabar S."/>
            <person name="Mulder N."/>
            <person name="Nakano N."/>
            <person name="Nakauchi H."/>
            <person name="Ng P."/>
            <person name="Nilsson R."/>
            <person name="Nishiguchi S."/>
            <person name="Nishikawa S."/>
            <person name="Nori F."/>
            <person name="Ohara O."/>
            <person name="Okazaki Y."/>
            <person name="Orlando V."/>
            <person name="Pang K.C."/>
            <person name="Pavan W.J."/>
            <person name="Pavesi G."/>
            <person name="Pesole G."/>
            <person name="Petrovsky N."/>
            <person name="Piazza S."/>
            <person name="Reed J."/>
            <person name="Reid J.F."/>
            <person name="Ring B.Z."/>
            <person name="Ringwald M."/>
            <person name="Rost B."/>
            <person name="Ruan Y."/>
            <person name="Salzberg S.L."/>
            <person name="Sandelin A."/>
            <person name="Schneider C."/>
            <person name="Schoenbach C."/>
            <person name="Sekiguchi K."/>
            <person name="Semple C.A."/>
            <person name="Seno S."/>
            <person name="Sessa L."/>
            <person name="Sheng Y."/>
            <person name="Shibata Y."/>
            <person name="Shimada H."/>
            <person name="Shimada K."/>
            <person name="Silva D."/>
            <person name="Sinclair B."/>
            <person name="Sperling S."/>
            <person name="Stupka E."/>
            <person name="Sugiura K."/>
            <person name="Sultana R."/>
            <person name="Takenaka Y."/>
            <person name="Taki K."/>
            <person name="Tammoja K."/>
            <person name="Tan S.L."/>
            <person name="Tang S."/>
            <person name="Taylor M.S."/>
            <person name="Tegner J."/>
            <person name="Teichmann S.A."/>
            <person name="Ueda H.R."/>
            <person name="van Nimwegen E."/>
            <person name="Verardo R."/>
            <person name="Wei C.L."/>
            <person name="Yagi K."/>
            <person name="Yamanishi H."/>
            <person name="Zabarovsky E."/>
            <person name="Zhu S."/>
            <person name="Zimmer A."/>
            <person name="Hide W."/>
            <person name="Bult C."/>
            <person name="Grimmond S.M."/>
            <person name="Teasdale R.D."/>
            <person name="Liu E.T."/>
            <person name="Brusic V."/>
            <person name="Quackenbush J."/>
            <person name="Wahlestedt C."/>
            <person name="Mattick J.S."/>
            <person name="Hume D.A."/>
            <person name="Kai C."/>
            <person name="Sasaki D."/>
            <person name="Tomaru Y."/>
            <person name="Fukuda S."/>
            <person name="Kanamori-Katayama M."/>
            <person name="Suzuki M."/>
            <person name="Aoki J."/>
            <person name="Arakawa T."/>
            <person name="Iida J."/>
            <person name="Imamura K."/>
            <person name="Itoh M."/>
            <person name="Kato T."/>
            <person name="Kawaji H."/>
            <person name="Kawagashira N."/>
            <person name="Kawashima T."/>
            <person name="Kojima M."/>
            <person name="Kondo S."/>
            <person name="Konno H."/>
            <person name="Nakano K."/>
            <person name="Ninomiya N."/>
            <person name="Nishio T."/>
            <person name="Okada M."/>
            <person name="Plessy C."/>
            <person name="Shibata K."/>
            <person name="Shiraki T."/>
            <person name="Suzuki S."/>
            <person name="Tagami M."/>
            <person name="Waki K."/>
            <person name="Watahiki A."/>
            <person name="Okamura-Oho Y."/>
            <person name="Suzuki H."/>
            <person name="Kawai J."/>
            <person name="Hayashizaki Y."/>
        </authorList>
    </citation>
    <scope>NUCLEOTIDE SEQUENCE [LARGE SCALE MRNA] (ISOFORM 1)</scope>
    <source>
        <strain>C57BL/6J</strain>
        <tissue>Tongue</tissue>
    </source>
</reference>
<reference key="4">
    <citation type="journal article" date="2004" name="Genome Res.">
        <title>The status, quality, and expansion of the NIH full-length cDNA project: the Mammalian Gene Collection (MGC).</title>
        <authorList>
            <consortium name="The MGC Project Team"/>
        </authorList>
    </citation>
    <scope>NUCLEOTIDE SEQUENCE [LARGE SCALE MRNA]</scope>
    <source>
        <strain>FVB/N</strain>
        <tissue>Liver</tissue>
    </source>
</reference>
<reference key="5">
    <citation type="journal article" date="2006" name="Diabetes">
        <title>OXPAT/PAT-1 is a PPAR-induced lipid droplet protein that promotes fatty acid utilization.</title>
        <authorList>
            <person name="Wolins N.E."/>
            <person name="Quaynor B.K."/>
            <person name="Skinner J.R."/>
            <person name="Tzekov A."/>
            <person name="Croce M.A."/>
            <person name="Gropler M.C."/>
            <person name="Varma V."/>
            <person name="Yao-Borengasser A."/>
            <person name="Rasouli N."/>
            <person name="Kern P.A."/>
            <person name="Finck B.N."/>
            <person name="Bickel P.E."/>
        </authorList>
    </citation>
    <scope>FUNCTION IN LIPOLYSIS</scope>
    <scope>SUBCELLULAR LOCATION</scope>
    <scope>TISSUE SPECIFICITY</scope>
    <scope>INDUCTION</scope>
</reference>
<reference key="6">
    <citation type="journal article" date="2006" name="J. Biol. Chem.">
        <title>MLDP, a novel PAT family protein localized to lipid droplets and enriched in the heart, is regulated by peroxisome proliferator-activated receptor alpha.</title>
        <authorList>
            <person name="Yamaguchi T."/>
            <person name="Matsushita S."/>
            <person name="Motojima K."/>
            <person name="Hirose F."/>
            <person name="Osumi T."/>
        </authorList>
    </citation>
    <scope>IDENTIFICATION</scope>
    <scope>INDUCTION</scope>
    <scope>SUBCELLULAR LOCATION</scope>
    <scope>TISSUE SPECIFICITY</scope>
</reference>
<reference key="7">
    <citation type="journal article" date="2007" name="Proc. Natl. Acad. Sci. U.S.A.">
        <title>Large-scale phosphorylation analysis of mouse liver.</title>
        <authorList>
            <person name="Villen J."/>
            <person name="Beausoleil S.A."/>
            <person name="Gerber S.A."/>
            <person name="Gygi S.P."/>
        </authorList>
    </citation>
    <scope>PHOSPHORYLATION [LARGE SCALE ANALYSIS] AT SER-163</scope>
    <scope>IDENTIFICATION BY MASS SPECTROMETRY [LARGE SCALE ANALYSIS]</scope>
    <source>
        <tissue>Liver</tissue>
    </source>
</reference>
<reference key="8">
    <citation type="journal article" date="2009" name="J. Biol. Chem.">
        <title>Functional interactions between Mldp (LSDP5) and Abhd5 in the control of intracellular lipid accumulation.</title>
        <authorList>
            <person name="Granneman J.G."/>
            <person name="Moore H.P."/>
            <person name="Mottillo E.P."/>
            <person name="Zhu Z."/>
        </authorList>
    </citation>
    <scope>FUNCTION IN LIPOLYSIS</scope>
    <scope>INTERACTION WITH ABHD5</scope>
</reference>
<reference key="9">
    <citation type="journal article" date="2009" name="J. Biol. Chem.">
        <title>Activation of hormone-sensitive lipase requires two steps, protein phosphorylation and binding to the PAT-1 domain of lipid droplet coat proteins.</title>
        <authorList>
            <person name="Wang H."/>
            <person name="Hu L."/>
            <person name="Dalen K."/>
            <person name="Dorward H."/>
            <person name="Marcinkiewicz A."/>
            <person name="Russell D."/>
            <person name="Gong D."/>
            <person name="Londos C."/>
            <person name="Yamaguchi T."/>
            <person name="Holm C."/>
            <person name="Rizzo M.A."/>
            <person name="Brasaemle D."/>
            <person name="Sztalryd C."/>
        </authorList>
    </citation>
    <scope>INTERACTION WITH LIPE</scope>
    <scope>SUBCELLULAR LOCATION</scope>
</reference>
<reference key="10">
    <citation type="journal article" date="2010" name="Cell">
        <title>A tissue-specific atlas of mouse protein phosphorylation and expression.</title>
        <authorList>
            <person name="Huttlin E.L."/>
            <person name="Jedrychowski M.P."/>
            <person name="Elias J.E."/>
            <person name="Goswami T."/>
            <person name="Rad R."/>
            <person name="Beausoleil S.A."/>
            <person name="Villen J."/>
            <person name="Haas W."/>
            <person name="Sowa M.E."/>
            <person name="Gygi S.P."/>
        </authorList>
    </citation>
    <scope>PHOSPHORYLATION [LARGE SCALE ANALYSIS] AT SER-17 AND SER-163</scope>
    <scope>IDENTIFICATION BY MASS SPECTROMETRY [LARGE SCALE ANALYSIS]</scope>
    <source>
        <tissue>Brown adipose tissue</tissue>
        <tissue>Heart</tissue>
        <tissue>Liver</tissue>
        <tissue>Lung</tissue>
    </source>
</reference>
<reference key="11">
    <citation type="journal article" date="2011" name="J. Biol. Chem.">
        <title>Interactions of perilipin-5 (Plin5) with adipose triglyceride lipase.</title>
        <authorList>
            <person name="Granneman J.G."/>
            <person name="Moore H.P."/>
            <person name="Mottillo E.P."/>
            <person name="Zhu Z."/>
            <person name="Zhou L."/>
        </authorList>
    </citation>
    <scope>INTERACTION WITH ABHD5 AND PNPLA2</scope>
    <scope>REGION</scope>
    <scope>HOMOOLIGOMERIZATION</scope>
</reference>
<reference key="12">
    <citation type="journal article" date="2011" name="J. Biol. Chem.">
        <title>Unique regulation of adipose triglyceride lipase (ATGL) by perilipin 5, a lipid droplet-associated protein.</title>
        <authorList>
            <person name="Wang H."/>
            <person name="Bell M."/>
            <person name="Sreenivasan U."/>
            <person name="Sreenevasan U."/>
            <person name="Hu H."/>
            <person name="Liu J."/>
            <person name="Dalen K."/>
            <person name="Londos C."/>
            <person name="Yamaguchi T."/>
            <person name="Rizzo M.A."/>
            <person name="Coleman R."/>
            <person name="Gong D."/>
            <person name="Brasaemle D."/>
            <person name="Sztalryd C."/>
        </authorList>
    </citation>
    <scope>FUNCTION IN LIPOLYSIS</scope>
    <scope>INTERACTION WITH PNPLA2</scope>
    <scope>REGION</scope>
    <scope>PHOSPHORYLATION BY PKA</scope>
</reference>
<reference key="13">
    <citation type="journal article" date="2011" name="J. Lipid Res.">
        <title>Perilipin 5, a lipid droplet-associated protein, provides physical and metabolic linkage to mitochondria.</title>
        <authorList>
            <person name="Wang H."/>
            <person name="Sreenivasan U."/>
            <person name="Sreenevasan U."/>
            <person name="Hu H."/>
            <person name="Saladino A."/>
            <person name="Polster B.M."/>
            <person name="Lund L.M."/>
            <person name="Gong D.W."/>
            <person name="Stanley W.C."/>
            <person name="Sztalryd C."/>
        </authorList>
    </citation>
    <scope>FUNCTION IN LIPID HOMEOSTASIS</scope>
    <scope>REGION</scope>
</reference>
<reference key="14">
    <citation type="journal article" date="2012" name="J. Biol. Chem.">
        <title>Perilipin 5, a lipid droplet-binding protein, protects heart from oxidative burden by sequestering fatty acid from excessive oxidation.</title>
        <authorList>
            <person name="Kuramoto K."/>
            <person name="Okamura T."/>
            <person name="Yamaguchi T."/>
            <person name="Nakamura T.Y."/>
            <person name="Wakabayashi S."/>
            <person name="Morinaga H."/>
            <person name="Nomura M."/>
            <person name="Yanase T."/>
            <person name="Otsu K."/>
            <person name="Usuda N."/>
            <person name="Matsumura S."/>
            <person name="Inoue K."/>
            <person name="Fushiki T."/>
            <person name="Kojima Y."/>
            <person name="Hashimoto T."/>
            <person name="Sakai F."/>
            <person name="Hirose F."/>
            <person name="Osumi T."/>
        </authorList>
    </citation>
    <scope>FUNCTION IN LIPOGENESIS</scope>
    <scope>DISRUPTION PHENOTYPE</scope>
</reference>
<reference key="15">
    <citation type="journal article" date="2012" name="PLoS ONE">
        <title>LSDP5 enhances triglyceride storage in hepatocytes by influencing lipolysis and fatty acid beta-oxidation of lipid droplets.</title>
        <authorList>
            <person name="Li H."/>
            <person name="Song Y."/>
            <person name="Zhang L.J."/>
            <person name="Gu Y."/>
            <person name="Li F.F."/>
            <person name="Pan S.Y."/>
            <person name="Jiang L.N."/>
            <person name="Liu F."/>
            <person name="Ye J."/>
            <person name="Li Q."/>
        </authorList>
    </citation>
    <scope>FUNCTION IN LIPID STORAGE</scope>
    <scope>REGION</scope>
</reference>
<reference key="16">
    <citation type="journal article" date="2013" name="Am. J. Physiol.">
        <title>Inactivation of Plin4 downregulates Plin5 and reduces cardiac lipid accumulation in mice.</title>
        <authorList>
            <person name="Chen W."/>
            <person name="Chang B."/>
            <person name="Wu X."/>
            <person name="Li L."/>
            <person name="Sleeman M."/>
            <person name="Chan L."/>
        </authorList>
    </citation>
    <scope>INDUCTION</scope>
</reference>
<reference evidence="18" key="17">
    <citation type="journal article" date="2013" name="J. Lipid Res.">
        <title>Cardiomyocyte-specific perilipin 5 overexpression leads to myocardial steatosis and modest cardiac dysfunction.</title>
        <authorList>
            <person name="Wang H."/>
            <person name="Sreenivasan U."/>
            <person name="Gong D.W."/>
            <person name="O'Connell K.A."/>
            <person name="Dabkowski E.R."/>
            <person name="Hecker P.A."/>
            <person name="Ionica N."/>
            <person name="Konig M."/>
            <person name="Mahurkar A."/>
            <person name="Sun Y."/>
            <person name="Stanley W.C."/>
            <person name="Sztalryd C."/>
        </authorList>
    </citation>
    <scope>FUNCTION IN LYPOLYSIS</scope>
    <scope>SUBCELLULAR LOCATION</scope>
</reference>
<reference key="18">
    <citation type="journal article" date="2013" name="J. Lipid Res.">
        <title>Fatty acids regulate perilipin5 in muscle by activating PPARdelta.</title>
        <authorList>
            <person name="Bindesboll C."/>
            <person name="Berg O."/>
            <person name="Arntsen B."/>
            <person name="Nebb H.I."/>
            <person name="Dalen K.T."/>
        </authorList>
    </citation>
    <scope>INDUCTION</scope>
</reference>
<gene>
    <name type="primary">Plin5</name>
    <name type="synonym">Lsdp5</name>
    <name type="synonym">Mldp</name>
    <name type="synonym">Oxpat</name>
    <name type="synonym">Pat1</name>
</gene>
<feature type="chain" id="PRO_0000338983" description="Perilipin-5">
    <location>
        <begin position="1"/>
        <end position="463"/>
    </location>
</feature>
<feature type="region of interest" description="Essential for lipid droplet targeting">
    <location>
        <begin position="1"/>
        <end position="188"/>
    </location>
</feature>
<feature type="region of interest" description="Interaction with LIPE" evidence="8">
    <location>
        <begin position="1"/>
        <end position="123"/>
    </location>
</feature>
<feature type="region of interest" description="Disordered" evidence="3">
    <location>
        <begin position="1"/>
        <end position="32"/>
    </location>
</feature>
<feature type="region of interest" description="Interaction with PNPLA2 and ABHD5">
    <location>
        <begin position="200"/>
        <end position="463"/>
    </location>
</feature>
<feature type="region of interest" description="Disordered" evidence="3">
    <location>
        <begin position="433"/>
        <end position="463"/>
    </location>
</feature>
<feature type="region of interest" description="Necessary for mitochondria recruitment at the lipid droplet surface">
    <location>
        <begin position="444"/>
        <end position="463"/>
    </location>
</feature>
<feature type="compositionally biased region" description="Polar residues" evidence="3">
    <location>
        <begin position="17"/>
        <end position="26"/>
    </location>
</feature>
<feature type="modified residue" description="Phosphoserine" evidence="20">
    <location>
        <position position="17"/>
    </location>
</feature>
<feature type="modified residue" description="Phosphoserine" evidence="19 20">
    <location>
        <position position="163"/>
    </location>
</feature>
<feature type="modified residue" description="Phosphoserine" evidence="2">
    <location>
        <position position="337"/>
    </location>
</feature>
<feature type="splice variant" id="VSP_034085" description="In isoform 2." evidence="17">
    <location>
        <begin position="1"/>
        <end position="15"/>
    </location>
</feature>
<sequence>MDQRGEDTTLAPHSRMSGDQTAQDPGSSLGELDQQNVVNRVVALPLVKATCTAVSSAYNSAKDRHPLLGSACRLAEHCVCSVTTCALDHAQPLLEHLQPQLATVNDLACRGLDKLEEKLPFLQQPSDMVVTSAKDTVAKSVTGMVDLAQRGRRWSGELRRSMSQAMDMVLGKSEKLVDRFLPMTEAELAVLAAEAEGPEVGTVEEQRQQQGYFVRLGSLSARLRHLAYEHSLGKLRQSKHRTQEMLAQLQETLELIQHMQRGASPSPTFHPPKTQELWGSWSPCLENGRSHSEVELETLALSRSLTLELQNAVDALAGCVRGLPPSAQAKVAEVQRSVDALQATFADAHCLGDVAPTALAEGRGSVARAHACVDEFLDLVLRAMPLPWLVGPFAPILVEQSEPLINLATCVDEVVGDPDPRWAHMDWPAQKRAWEAESADPGGQEAEPPRGQGKHTMMPELDF</sequence>
<dbReference type="EMBL" id="DQ473305">
    <property type="protein sequence ID" value="ABF13218.1"/>
    <property type="molecule type" value="mRNA"/>
</dbReference>
<dbReference type="EMBL" id="AY919875">
    <property type="protein sequence ID" value="AAX12443.1"/>
    <property type="molecule type" value="mRNA"/>
</dbReference>
<dbReference type="EMBL" id="AK075872">
    <property type="protein sequence ID" value="BAC36019.1"/>
    <property type="molecule type" value="mRNA"/>
</dbReference>
<dbReference type="EMBL" id="BC024138">
    <property type="protein sequence ID" value="AAH24138.2"/>
    <property type="molecule type" value="mRNA"/>
</dbReference>
<dbReference type="CCDS" id="CCDS37662.1">
    <molecule id="Q8BVZ1-1"/>
</dbReference>
<dbReference type="RefSeq" id="NP_001070816.1">
    <molecule id="Q8BVZ1-1"/>
    <property type="nucleotide sequence ID" value="NM_001077348.1"/>
</dbReference>
<dbReference type="RefSeq" id="NP_080150.2">
    <molecule id="Q8BVZ1-1"/>
    <property type="nucleotide sequence ID" value="NM_025874.3"/>
</dbReference>
<dbReference type="SMR" id="Q8BVZ1"/>
<dbReference type="BioGRID" id="211843">
    <property type="interactions" value="2"/>
</dbReference>
<dbReference type="FunCoup" id="Q8BVZ1">
    <property type="interactions" value="317"/>
</dbReference>
<dbReference type="STRING" id="10090.ENSMUSP00000019808"/>
<dbReference type="GlyGen" id="Q8BVZ1">
    <property type="glycosylation" value="1 site, 1 O-linked glycan (1 site)"/>
</dbReference>
<dbReference type="iPTMnet" id="Q8BVZ1"/>
<dbReference type="PhosphoSitePlus" id="Q8BVZ1"/>
<dbReference type="SwissPalm" id="Q8BVZ1"/>
<dbReference type="jPOST" id="Q8BVZ1"/>
<dbReference type="PaxDb" id="10090-ENSMUSP00000019808"/>
<dbReference type="PeptideAtlas" id="Q8BVZ1"/>
<dbReference type="ProteomicsDB" id="289620">
    <molecule id="Q8BVZ1-1"/>
</dbReference>
<dbReference type="ProteomicsDB" id="289621">
    <molecule id="Q8BVZ1-2"/>
</dbReference>
<dbReference type="Antibodypedia" id="23670">
    <property type="antibodies" value="177 antibodies from 16 providers"/>
</dbReference>
<dbReference type="Ensembl" id="ENSMUST00000019808.12">
    <molecule id="Q8BVZ1-1"/>
    <property type="protein sequence ID" value="ENSMUSP00000019808.6"/>
    <property type="gene ID" value="ENSMUSG00000011305.12"/>
</dbReference>
<dbReference type="Ensembl" id="ENSMUST00000113072.3">
    <molecule id="Q8BVZ1-1"/>
    <property type="protein sequence ID" value="ENSMUSP00000108695.3"/>
    <property type="gene ID" value="ENSMUSG00000011305.12"/>
</dbReference>
<dbReference type="GeneID" id="66968"/>
<dbReference type="KEGG" id="mmu:66968"/>
<dbReference type="UCSC" id="uc008daz.1">
    <molecule id="Q8BVZ1-1"/>
    <property type="organism name" value="mouse"/>
</dbReference>
<dbReference type="AGR" id="MGI:1914218"/>
<dbReference type="CTD" id="440503"/>
<dbReference type="MGI" id="MGI:1914218">
    <property type="gene designation" value="Plin5"/>
</dbReference>
<dbReference type="VEuPathDB" id="HostDB:ENSMUSG00000011305"/>
<dbReference type="eggNOG" id="KOG4790">
    <property type="taxonomic scope" value="Eukaryota"/>
</dbReference>
<dbReference type="GeneTree" id="ENSGT00950000182920"/>
<dbReference type="HOGENOM" id="CLU_035133_1_0_1"/>
<dbReference type="InParanoid" id="Q8BVZ1"/>
<dbReference type="OMA" id="GQCNPKT"/>
<dbReference type="OrthoDB" id="376826at2759"/>
<dbReference type="PhylomeDB" id="Q8BVZ1"/>
<dbReference type="TreeFam" id="TF328397"/>
<dbReference type="BioGRID-ORCS" id="66968">
    <property type="hits" value="1 hit in 79 CRISPR screens"/>
</dbReference>
<dbReference type="PRO" id="PR:Q8BVZ1"/>
<dbReference type="Proteomes" id="UP000000589">
    <property type="component" value="Chromosome 17"/>
</dbReference>
<dbReference type="RNAct" id="Q8BVZ1">
    <property type="molecule type" value="protein"/>
</dbReference>
<dbReference type="Bgee" id="ENSMUSG00000011305">
    <property type="expression patterns" value="Expressed in interventricular septum and 133 other cell types or tissues"/>
</dbReference>
<dbReference type="GO" id="GO:0005737">
    <property type="term" value="C:cytoplasm"/>
    <property type="evidence" value="ECO:0000314"/>
    <property type="project" value="UniProtKB"/>
</dbReference>
<dbReference type="GO" id="GO:0005829">
    <property type="term" value="C:cytosol"/>
    <property type="evidence" value="ECO:0000314"/>
    <property type="project" value="MGI"/>
</dbReference>
<dbReference type="GO" id="GO:0005811">
    <property type="term" value="C:lipid droplet"/>
    <property type="evidence" value="ECO:0000314"/>
    <property type="project" value="UniProtKB"/>
</dbReference>
<dbReference type="GO" id="GO:0005739">
    <property type="term" value="C:mitochondrion"/>
    <property type="evidence" value="ECO:0000250"/>
    <property type="project" value="UniProtKB"/>
</dbReference>
<dbReference type="GO" id="GO:0042802">
    <property type="term" value="F:identical protein binding"/>
    <property type="evidence" value="ECO:0000353"/>
    <property type="project" value="UniProtKB"/>
</dbReference>
<dbReference type="GO" id="GO:0035473">
    <property type="term" value="F:lipase binding"/>
    <property type="evidence" value="ECO:0000353"/>
    <property type="project" value="UniProtKB"/>
</dbReference>
<dbReference type="GO" id="GO:0034389">
    <property type="term" value="P:lipid droplet organization"/>
    <property type="evidence" value="ECO:0000315"/>
    <property type="project" value="UniProtKB"/>
</dbReference>
<dbReference type="GO" id="GO:0006629">
    <property type="term" value="P:lipid metabolic process"/>
    <property type="evidence" value="ECO:0007669"/>
    <property type="project" value="UniProtKB-KW"/>
</dbReference>
<dbReference type="GO" id="GO:0019915">
    <property type="term" value="P:lipid storage"/>
    <property type="evidence" value="ECO:0000314"/>
    <property type="project" value="CACAO"/>
</dbReference>
<dbReference type="GO" id="GO:0051646">
    <property type="term" value="P:mitochondrion localization"/>
    <property type="evidence" value="ECO:0000315"/>
    <property type="project" value="UniProtKB"/>
</dbReference>
<dbReference type="GO" id="GO:0031999">
    <property type="term" value="P:negative regulation of fatty acid beta-oxidation"/>
    <property type="evidence" value="ECO:0000314"/>
    <property type="project" value="UniProtKB"/>
</dbReference>
<dbReference type="GO" id="GO:0060192">
    <property type="term" value="P:negative regulation of lipase activity"/>
    <property type="evidence" value="ECO:0000315"/>
    <property type="project" value="UniProtKB"/>
</dbReference>
<dbReference type="GO" id="GO:0050995">
    <property type="term" value="P:negative regulation of lipid catabolic process"/>
    <property type="evidence" value="ECO:0000314"/>
    <property type="project" value="UniProtKB"/>
</dbReference>
<dbReference type="GO" id="GO:0035359">
    <property type="term" value="P:negative regulation of peroxisome proliferator activated receptor signaling pathway"/>
    <property type="evidence" value="ECO:0000314"/>
    <property type="project" value="UniProtKB"/>
</dbReference>
<dbReference type="GO" id="GO:2000378">
    <property type="term" value="P:negative regulation of reactive oxygen species metabolic process"/>
    <property type="evidence" value="ECO:0000315"/>
    <property type="project" value="UniProtKB"/>
</dbReference>
<dbReference type="GO" id="GO:0010897">
    <property type="term" value="P:negative regulation of triglyceride catabolic process"/>
    <property type="evidence" value="ECO:0000314"/>
    <property type="project" value="UniProtKB"/>
</dbReference>
<dbReference type="GO" id="GO:0032000">
    <property type="term" value="P:positive regulation of fatty acid beta-oxidation"/>
    <property type="evidence" value="ECO:0000314"/>
    <property type="project" value="UniProtKB"/>
</dbReference>
<dbReference type="GO" id="GO:0060193">
    <property type="term" value="P:positive regulation of lipase activity"/>
    <property type="evidence" value="ECO:0000250"/>
    <property type="project" value="UniProtKB"/>
</dbReference>
<dbReference type="GO" id="GO:0010884">
    <property type="term" value="P:positive regulation of lipid storage"/>
    <property type="evidence" value="ECO:0000250"/>
    <property type="project" value="UniProtKB"/>
</dbReference>
<dbReference type="GO" id="GO:0010867">
    <property type="term" value="P:positive regulation of triglyceride biosynthetic process"/>
    <property type="evidence" value="ECO:0000314"/>
    <property type="project" value="UniProtKB"/>
</dbReference>
<dbReference type="GO" id="GO:0010890">
    <property type="term" value="P:positive regulation of triglyceride storage"/>
    <property type="evidence" value="ECO:0000314"/>
    <property type="project" value="UniProtKB"/>
</dbReference>
<dbReference type="FunFam" id="1.20.120.340:FF:000004">
    <property type="entry name" value="Perilipin"/>
    <property type="match status" value="1"/>
</dbReference>
<dbReference type="Gene3D" id="1.20.120.340">
    <property type="entry name" value="Flagellar protein FliS"/>
    <property type="match status" value="1"/>
</dbReference>
<dbReference type="Gene3D" id="3.30.720.170">
    <property type="entry name" value="Perilipin, alpha-beta domain"/>
    <property type="match status" value="1"/>
</dbReference>
<dbReference type="InterPro" id="IPR004279">
    <property type="entry name" value="Perilipin"/>
</dbReference>
<dbReference type="PANTHER" id="PTHR14024">
    <property type="entry name" value="PERILIPIN"/>
    <property type="match status" value="1"/>
</dbReference>
<dbReference type="PANTHER" id="PTHR14024:SF9">
    <property type="entry name" value="PERILIPIN-5"/>
    <property type="match status" value="1"/>
</dbReference>
<dbReference type="Pfam" id="PF03036">
    <property type="entry name" value="Perilipin"/>
    <property type="match status" value="1"/>
</dbReference>
<dbReference type="PIRSF" id="PIRSF036881">
    <property type="entry name" value="PAT"/>
    <property type="match status" value="1"/>
</dbReference>
<dbReference type="SUPFAM" id="SSF109775">
    <property type="entry name" value="Mannose-6-phosphate receptor binding protein 1 (Tip47), C-terminal domain"/>
    <property type="match status" value="1"/>
</dbReference>
<name>PLIN5_MOUSE</name>
<accession>Q8BVZ1</accession>
<accession>Q78IK8</accession>
<comment type="function">
    <text evidence="5 7 10 11 12 13 14">Lipid droplet-associated protein that maintains the balance between lipogenesis and lipolysis and also regulates fatty acid oxidation in oxidative tissues. Recruits mitochondria to the surface of lipid droplets and is involved in lipid droplet homeostasis by regulating both the storage of fatty acids in the form of triglycerides and the release of fatty acids for mitochondrial fatty acid oxidation. In lipid droplet triacylglycerol hydrolysis, plays a role as a scaffolding protein for three major key lipolytic players: ABHD5, PNPLA2 and LIPE. Reduces the triacylglycerol hydrolase activity of PNPLA2 by recruiting and sequestering PNPLA2 to lipid droplets. Phosphorylation by PKA enables lipolysis probably by promoting release of ABHD5 from the perilipin scaffold and by facilitating interaction of ABHD5 with PNPLA2. Also increases lipolysis through interaction with LIPE and upon PKA-mediated phosphorylation of LIPE.</text>
</comment>
<comment type="subunit">
    <text evidence="7 8 9 10">Homooligomer. Interacts with PNPLA2; prevents interaction of PNPLA2 with ABHD5. Interacts with ABHD5; targets ABHD5 to lipid droplets and promotes interaction of ABHD5 with PNPLA2. Interacts with LIPE.</text>
</comment>
<comment type="subcellular location">
    <subcellularLocation>
        <location evidence="4 5 6 8 14">Lipid droplet</location>
    </subcellularLocation>
    <subcellularLocation>
        <location evidence="6 8">Cytoplasm</location>
    </subcellularLocation>
    <subcellularLocation>
        <location evidence="1">Mitochondrion</location>
    </subcellularLocation>
    <text evidence="4 5 6 8">Lipid droplet surface-associated (PubMed:16571721, PubMed:17130488, PubMed:17234449). Exchanges between lipid droplets and the cytoplasm (PubMed:19717842).</text>
</comment>
<comment type="alternative products">
    <event type="alternative initiation"/>
    <isoform>
        <id>Q8BVZ1-1</id>
        <name>1</name>
        <sequence type="displayed"/>
    </isoform>
    <isoform>
        <id>Q8BVZ1-2</id>
        <name>2</name>
        <sequence type="described" ref="VSP_034085"/>
    </isoform>
</comment>
<comment type="tissue specificity">
    <text evidence="4 5 6">Highly expressed in oxidative tissues, including heart, liver, brown adipose tissue (BAT) and slow-twitch fibers of skeletal muscle. Lower expression in epididymal white adipose tissue and anterior tibialis and quadriceps. Expressed in adrenal glands. Isoform 2 has the highest expression in heart.</text>
</comment>
<comment type="induction">
    <text evidence="4 5 6 15 16">Up-regulated by fasting, PPARD, PPARA and PLIN4. Increased in muscle of high-fat diet fed mice. Induced by unsaturated long chain fatty acid in muscle.</text>
</comment>
<comment type="PTM">
    <text evidence="10">Phosphorylated by PKA. Phosphorylated on serine in skeletal muscle at rest or with lipolytic stimulation.</text>
</comment>
<comment type="disruption phenotype">
    <text evidence="12">No visible phenotype. Mice lack detectable lipid droplets in heart. The triacylglycerol and fatty acid content in heart is lower.</text>
</comment>
<comment type="similarity">
    <text evidence="18">Belongs to the perilipin family.</text>
</comment>